<comment type="subunit">
    <text evidence="1">Forms oligomers.</text>
</comment>
<comment type="subcellular location">
    <subcellularLocation>
        <location evidence="1">Cytoplasm</location>
        <location evidence="1">Nucleoid</location>
    </subcellularLocation>
</comment>
<comment type="similarity">
    <text evidence="1">Belongs to the MraZ family.</text>
</comment>
<protein>
    <recommendedName>
        <fullName>Transcriptional regulator MraZ</fullName>
    </recommendedName>
</protein>
<reference key="1">
    <citation type="journal article" date="2010" name="J. Bacteriol.">
        <title>The genetic basis of laboratory adaptation in Caulobacter crescentus.</title>
        <authorList>
            <person name="Marks M.E."/>
            <person name="Castro-Rojas C.M."/>
            <person name="Teiling C."/>
            <person name="Du L."/>
            <person name="Kapatral V."/>
            <person name="Walunas T.L."/>
            <person name="Crosson S."/>
        </authorList>
    </citation>
    <scope>NUCLEOTIDE SEQUENCE [LARGE SCALE GENOMIC DNA]</scope>
    <source>
        <strain>NA1000 / CB15N</strain>
    </source>
</reference>
<dbReference type="EMBL" id="CP001340">
    <property type="protein sequence ID" value="ACL96111.1"/>
    <property type="molecule type" value="Genomic_DNA"/>
</dbReference>
<dbReference type="RefSeq" id="WP_010920419.1">
    <property type="nucleotide sequence ID" value="NC_011916.1"/>
</dbReference>
<dbReference type="RefSeq" id="YP_002518019.1">
    <property type="nucleotide sequence ID" value="NC_011916.1"/>
</dbReference>
<dbReference type="SMR" id="B8H0A3"/>
<dbReference type="GeneID" id="7332748"/>
<dbReference type="KEGG" id="ccs:CCNA_02646"/>
<dbReference type="PATRIC" id="fig|565050.3.peg.2594"/>
<dbReference type="HOGENOM" id="CLU_107907_1_0_5"/>
<dbReference type="OrthoDB" id="9807753at2"/>
<dbReference type="PhylomeDB" id="B8H0A3"/>
<dbReference type="Proteomes" id="UP000001364">
    <property type="component" value="Chromosome"/>
</dbReference>
<dbReference type="GO" id="GO:0005737">
    <property type="term" value="C:cytoplasm"/>
    <property type="evidence" value="ECO:0007669"/>
    <property type="project" value="UniProtKB-UniRule"/>
</dbReference>
<dbReference type="GO" id="GO:0009295">
    <property type="term" value="C:nucleoid"/>
    <property type="evidence" value="ECO:0007669"/>
    <property type="project" value="UniProtKB-SubCell"/>
</dbReference>
<dbReference type="GO" id="GO:0003700">
    <property type="term" value="F:DNA-binding transcription factor activity"/>
    <property type="evidence" value="ECO:0007669"/>
    <property type="project" value="UniProtKB-UniRule"/>
</dbReference>
<dbReference type="GO" id="GO:0000976">
    <property type="term" value="F:transcription cis-regulatory region binding"/>
    <property type="evidence" value="ECO:0007669"/>
    <property type="project" value="TreeGrafter"/>
</dbReference>
<dbReference type="GO" id="GO:2000143">
    <property type="term" value="P:negative regulation of DNA-templated transcription initiation"/>
    <property type="evidence" value="ECO:0007669"/>
    <property type="project" value="TreeGrafter"/>
</dbReference>
<dbReference type="CDD" id="cd16321">
    <property type="entry name" value="MraZ_C"/>
    <property type="match status" value="1"/>
</dbReference>
<dbReference type="CDD" id="cd16320">
    <property type="entry name" value="MraZ_N"/>
    <property type="match status" value="1"/>
</dbReference>
<dbReference type="Gene3D" id="3.40.1550.20">
    <property type="entry name" value="Transcriptional regulator MraZ domain"/>
    <property type="match status" value="1"/>
</dbReference>
<dbReference type="HAMAP" id="MF_01008">
    <property type="entry name" value="MraZ"/>
    <property type="match status" value="1"/>
</dbReference>
<dbReference type="InterPro" id="IPR003444">
    <property type="entry name" value="MraZ"/>
</dbReference>
<dbReference type="InterPro" id="IPR035644">
    <property type="entry name" value="MraZ_C"/>
</dbReference>
<dbReference type="InterPro" id="IPR020603">
    <property type="entry name" value="MraZ_dom"/>
</dbReference>
<dbReference type="InterPro" id="IPR035642">
    <property type="entry name" value="MraZ_N"/>
</dbReference>
<dbReference type="InterPro" id="IPR038619">
    <property type="entry name" value="MraZ_sf"/>
</dbReference>
<dbReference type="InterPro" id="IPR007159">
    <property type="entry name" value="SpoVT-AbrB_dom"/>
</dbReference>
<dbReference type="InterPro" id="IPR037914">
    <property type="entry name" value="SpoVT-AbrB_sf"/>
</dbReference>
<dbReference type="PANTHER" id="PTHR34701">
    <property type="entry name" value="TRANSCRIPTIONAL REGULATOR MRAZ"/>
    <property type="match status" value="1"/>
</dbReference>
<dbReference type="PANTHER" id="PTHR34701:SF1">
    <property type="entry name" value="TRANSCRIPTIONAL REGULATOR MRAZ"/>
    <property type="match status" value="1"/>
</dbReference>
<dbReference type="Pfam" id="PF02381">
    <property type="entry name" value="MraZ"/>
    <property type="match status" value="2"/>
</dbReference>
<dbReference type="SUPFAM" id="SSF89447">
    <property type="entry name" value="AbrB/MazE/MraZ-like"/>
    <property type="match status" value="1"/>
</dbReference>
<dbReference type="PROSITE" id="PS51740">
    <property type="entry name" value="SPOVT_ABRB"/>
    <property type="match status" value="2"/>
</dbReference>
<evidence type="ECO:0000255" key="1">
    <source>
        <dbReference type="HAMAP-Rule" id="MF_01008"/>
    </source>
</evidence>
<evidence type="ECO:0000255" key="2">
    <source>
        <dbReference type="PROSITE-ProRule" id="PRU01076"/>
    </source>
</evidence>
<keyword id="KW-0963">Cytoplasm</keyword>
<keyword id="KW-0238">DNA-binding</keyword>
<keyword id="KW-1185">Reference proteome</keyword>
<keyword id="KW-0677">Repeat</keyword>
<keyword id="KW-0804">Transcription</keyword>
<keyword id="KW-0805">Transcription regulation</keyword>
<name>MRAZ_CAUVN</name>
<proteinExistence type="inferred from homology"/>
<accession>B8H0A3</accession>
<organism>
    <name type="scientific">Caulobacter vibrioides (strain NA1000 / CB15N)</name>
    <name type="common">Caulobacter crescentus</name>
    <dbReference type="NCBI Taxonomy" id="565050"/>
    <lineage>
        <taxon>Bacteria</taxon>
        <taxon>Pseudomonadati</taxon>
        <taxon>Pseudomonadota</taxon>
        <taxon>Alphaproteobacteria</taxon>
        <taxon>Caulobacterales</taxon>
        <taxon>Caulobacteraceae</taxon>
        <taxon>Caulobacter</taxon>
    </lineage>
</organism>
<feature type="chain" id="PRO_1000148849" description="Transcriptional regulator MraZ">
    <location>
        <begin position="1"/>
        <end position="156"/>
    </location>
</feature>
<feature type="domain" description="SpoVT-AbrB 1" evidence="2">
    <location>
        <begin position="5"/>
        <end position="51"/>
    </location>
</feature>
<feature type="domain" description="SpoVT-AbrB 2" evidence="2">
    <location>
        <begin position="80"/>
        <end position="123"/>
    </location>
</feature>
<gene>
    <name evidence="1" type="primary">mraZ</name>
    <name type="ordered locus">CCNA_02646</name>
</gene>
<sequence>MFLSTFEKQLDSKRRIVVPQEFRAAVSGPFDGIFCFPSIEADCLEAGGKALFDRYQAVIEEMPFGDPTRTALETSILGGMAKLTFDTAGRITLPDHLCDMFGLTDSVAVVGMGERFQIWSREAFQAHRAQQRDLAREGLAALRAQQRAAKFAGGAA</sequence>